<sequence>MSEKEELPLTLTSIGAATATSDYHQRVGSSGEGISSSSSDVDPRFMQNSPTGLMISQSSSMCTVPPGMAATPPISSGSGLSQQLNNSSSSKLCQVEGCQKGARDASGRCISHGGGRRCQKPDCQKGAEGKTVYCKAHGGGRRCEYLGCTKGAEGSTDFCIAHGGGRRCNHEDCTRSAWGRTEFCVKHGGGARCKTYGCGKSASGPLPFCRAHGGGKKCSHEDCTGFARGRSGLCLMHGGGKRCQRENCTKSAEGLSGLCISHGGGRRCQSIGCTKGAKGSKMFCKACITKRPLTIDGGGNMGGVTTGDALNYLKAVKDKFEDSEKYDTFLEVLNDCKHQGVDTSGVIARLKDLFKGHDDLLLGFNTYLSKEYQITILPEDDFPIDFLDKVEGPYEMTYQQAQTVQANANMQPQTEYPSSSAVQSFSSGQPQIPTSAPDSSLLAKSNTSGITIIEHMSQQPLNVDKQVNDGYNWQKYGQKKVKGSKFPLSYYKCTYLGCPSKRKVERSLDGQVAEIVYKDRHNHEPPNQGKDGSTTYLSGSSTHINCMSSELTASQFSSNKTKIEQQEAASLATTIEYMSEASDNEEDSNGETSEGEKDEDEPEPKRRITEVQVSELADASDRTVREPRVIFQTTSEVDNLDDGYRWRKYGQKVVKGNPYPRFSSSKDYDVVIRYGRADISNEDFISHLRASLCRRGISVYEKFNEVDALPKCRVLIIVLTSTYVPSNLLNILEHQHTEDRVVYPIFYRLSPYDFVCNSKNYERFYLQDEPKKWQAALKEITQMPGYTLTDKSESELIDEIVRDALKVLCSADKVNMIGMDMQVEEILSLLCIESLDVRSIGIWGTVGIGKTTIAEEIFRKISVQYETCVVLKDLHKEVEVKGHDAVRENFLSEVLEVEPHVIRISDIKTSFLRSRLQRKRILVILDDVNDYRDVDTFLGTLNYFGPGSRIIMTSRNRRVFVLCKIDHVYEVKPLDIPKSLLLLDRGTCQIVLSPEVYKTLSLELVKFSNGNPQVLQFLSSIDREWNKLSQEVKTTSPIYIPGIFEKSCCGLDDNERGIFLDIACFFNRIDKDNVAMLLDGCGFSAHVGFRGLVDKSLLTISQHNLVDMLSFIQATGREIVRQESADRPGDRSRLWNADYIRHVFINDTGTSAIEGIFLDMLNLKFDANPNVFEKMCNLRLLKLYCSKAEEKHGVSFPQGLEYLPSKLRLLHWEYYPLSSLPKSFNPENLVELNLPSSCAKKLWKGKKARFCTTNSSLEKLKKMRLSYSDQLTKIPRLSSATNLEHIDLEGCNSLLSLSQSISYLKKLVFLNLKGCSKLENIPSMVDLESLEVLNLSGCSKLGNFPEISPNVKELYMGGTMIQEIPSSIKNLVLLEKLDLENSRHLKNLPTSIYKLKHLETLNLSGCISLERFPDSSRRMKCLRFLDLSRTDIKELPSSISYLTALDELLFVDSRRNSPVVTNPNANSTELMPSESSKLEILGTPADNEVVVGGTVEKTRGIERTPTILVKSREYLIPDDVVAVGGDIKGLRPPVLQLQPAMKLSHIPRGSTWDFVTHFAPPETVAPPSSSSEAREEEVETEETGAMFIPLGDKETCSFTVNKGDSSRTISNTSPIYASEGSFITCWQKGQLLGRGSLGSVYEGISADGDFFAFKEVSLLDQGSQAHEWIQQVEGGIALLSQLQHQNIVRYRGTTKDESNLYIFLELVTQGSLRKLYQRNQLGDSVVSLYTRQILDGLKYLHDKGFIHRNIKCANVLVDANGTVKLADFGLAKVMSLWRTPYWNWMAPEVILNPKDYDGYGTPADIWSLGCTVLEMLTGQIPYSDLEIGTALYNIGTGKLPKIPDILSLDARDFILTCLKVNPEERPTAAELLNHPFVNMPLPSSGSGSVSSLLRG</sequence>
<dbReference type="EMBL" id="AL049638">
    <property type="protein sequence ID" value="CAB40943.1"/>
    <property type="molecule type" value="Genomic_DNA"/>
</dbReference>
<dbReference type="EMBL" id="AL161533">
    <property type="protein sequence ID" value="CAB78245.1"/>
    <property type="molecule type" value="Genomic_DNA"/>
</dbReference>
<dbReference type="EMBL" id="CP002687">
    <property type="protein sequence ID" value="AEE83085.1"/>
    <property type="molecule type" value="Genomic_DNA"/>
</dbReference>
<dbReference type="PIR" id="T06609">
    <property type="entry name" value="T06609"/>
</dbReference>
<dbReference type="RefSeq" id="NP_001118968.1">
    <molecule id="Q9SZ67-1"/>
    <property type="nucleotide sequence ID" value="NM_001125496.2"/>
</dbReference>
<dbReference type="SMR" id="Q9SZ67"/>
<dbReference type="BioGRID" id="12108">
    <property type="interactions" value="2"/>
</dbReference>
<dbReference type="FunCoup" id="Q9SZ67">
    <property type="interactions" value="8"/>
</dbReference>
<dbReference type="IntAct" id="Q9SZ67">
    <property type="interactions" value="2"/>
</dbReference>
<dbReference type="STRING" id="3702.Q9SZ67"/>
<dbReference type="GlyGen" id="Q9SZ67">
    <property type="glycosylation" value="2 sites"/>
</dbReference>
<dbReference type="iPTMnet" id="Q9SZ67"/>
<dbReference type="PaxDb" id="3702-AT4G12020.2"/>
<dbReference type="ProteomicsDB" id="234218">
    <molecule id="Q9SZ67-1"/>
</dbReference>
<dbReference type="EnsemblPlants" id="AT4G12020.2">
    <molecule id="Q9SZ67-1"/>
    <property type="protein sequence ID" value="AT4G12020.2"/>
    <property type="gene ID" value="AT4G12020"/>
</dbReference>
<dbReference type="GeneID" id="826810"/>
<dbReference type="Gramene" id="AT4G12020.2">
    <molecule id="Q9SZ67-1"/>
    <property type="protein sequence ID" value="AT4G12020.2"/>
    <property type="gene ID" value="AT4G12020"/>
</dbReference>
<dbReference type="KEGG" id="ath:AT4G12020"/>
<dbReference type="Araport" id="AT4G12020"/>
<dbReference type="TAIR" id="AT4G12020">
    <property type="gene designation" value="WRKY19"/>
</dbReference>
<dbReference type="eggNOG" id="KOG0198">
    <property type="taxonomic scope" value="Eukaryota"/>
</dbReference>
<dbReference type="eggNOG" id="KOG4204">
    <property type="taxonomic scope" value="Eukaryota"/>
</dbReference>
<dbReference type="HOGENOM" id="CLU_002119_0_0_1"/>
<dbReference type="InParanoid" id="Q9SZ67"/>
<dbReference type="PRO" id="PR:Q9SZ67"/>
<dbReference type="Proteomes" id="UP000006548">
    <property type="component" value="Chromosome 4"/>
</dbReference>
<dbReference type="ExpressionAtlas" id="Q9SZ67">
    <property type="expression patterns" value="baseline and differential"/>
</dbReference>
<dbReference type="GO" id="GO:0009941">
    <property type="term" value="C:chloroplast envelope"/>
    <property type="evidence" value="ECO:0007005"/>
    <property type="project" value="TAIR"/>
</dbReference>
<dbReference type="GO" id="GO:0005634">
    <property type="term" value="C:nucleus"/>
    <property type="evidence" value="ECO:0007669"/>
    <property type="project" value="UniProtKB-SubCell"/>
</dbReference>
<dbReference type="GO" id="GO:0043531">
    <property type="term" value="F:ADP binding"/>
    <property type="evidence" value="ECO:0007669"/>
    <property type="project" value="InterPro"/>
</dbReference>
<dbReference type="GO" id="GO:0005524">
    <property type="term" value="F:ATP binding"/>
    <property type="evidence" value="ECO:0007669"/>
    <property type="project" value="UniProtKB-KW"/>
</dbReference>
<dbReference type="GO" id="GO:0003700">
    <property type="term" value="F:DNA-binding transcription factor activity"/>
    <property type="evidence" value="ECO:0000250"/>
    <property type="project" value="TAIR"/>
</dbReference>
<dbReference type="GO" id="GO:0004674">
    <property type="term" value="F:protein serine/threonine kinase activity"/>
    <property type="evidence" value="ECO:0007669"/>
    <property type="project" value="UniProtKB-KW"/>
</dbReference>
<dbReference type="GO" id="GO:0043565">
    <property type="term" value="F:sequence-specific DNA binding"/>
    <property type="evidence" value="ECO:0007669"/>
    <property type="project" value="InterPro"/>
</dbReference>
<dbReference type="GO" id="GO:0006952">
    <property type="term" value="P:defense response"/>
    <property type="evidence" value="ECO:0007669"/>
    <property type="project" value="UniProtKB-KW"/>
</dbReference>
<dbReference type="GO" id="GO:0007165">
    <property type="term" value="P:signal transduction"/>
    <property type="evidence" value="ECO:0007669"/>
    <property type="project" value="InterPro"/>
</dbReference>
<dbReference type="FunFam" id="3.80.10.10:FF:000386">
    <property type="entry name" value="Disease resistance protein RPS4"/>
    <property type="match status" value="1"/>
</dbReference>
<dbReference type="FunFam" id="1.10.510.10:FF:000359">
    <property type="entry name" value="Mitogen-activated protein kinase 1, putative, expressed"/>
    <property type="match status" value="1"/>
</dbReference>
<dbReference type="FunFam" id="1.20.1160.11:FF:000001">
    <property type="entry name" value="Paired amphipathic helix protein Sin3"/>
    <property type="match status" value="1"/>
</dbReference>
<dbReference type="FunFam" id="3.40.50.300:FF:002561">
    <property type="entry name" value="Protein kinase family protein"/>
    <property type="match status" value="1"/>
</dbReference>
<dbReference type="FunFam" id="2.20.25.80:FF:000006">
    <property type="entry name" value="WRKY transcription factor"/>
    <property type="match status" value="1"/>
</dbReference>
<dbReference type="Gene3D" id="3.40.50.300">
    <property type="entry name" value="P-loop containing nucleotide triphosphate hydrolases"/>
    <property type="match status" value="1"/>
</dbReference>
<dbReference type="Gene3D" id="1.20.1160.11">
    <property type="entry name" value="Paired amphipathic helix"/>
    <property type="match status" value="1"/>
</dbReference>
<dbReference type="Gene3D" id="3.80.10.10">
    <property type="entry name" value="Ribonuclease Inhibitor"/>
    <property type="match status" value="2"/>
</dbReference>
<dbReference type="Gene3D" id="3.40.50.10140">
    <property type="entry name" value="Toll/interleukin-1 receptor homology (TIR) domain"/>
    <property type="match status" value="1"/>
</dbReference>
<dbReference type="Gene3D" id="1.10.510.10">
    <property type="entry name" value="Transferase(Phosphotransferase) domain 1"/>
    <property type="match status" value="1"/>
</dbReference>
<dbReference type="Gene3D" id="2.20.25.80">
    <property type="entry name" value="WRKY domain"/>
    <property type="match status" value="2"/>
</dbReference>
<dbReference type="InterPro" id="IPR044974">
    <property type="entry name" value="Disease_R_plants"/>
</dbReference>
<dbReference type="InterPro" id="IPR011009">
    <property type="entry name" value="Kinase-like_dom_sf"/>
</dbReference>
<dbReference type="InterPro" id="IPR011713">
    <property type="entry name" value="Leu-rich_rpt_3"/>
</dbReference>
<dbReference type="InterPro" id="IPR032675">
    <property type="entry name" value="LRR_dom_sf"/>
</dbReference>
<dbReference type="InterPro" id="IPR002182">
    <property type="entry name" value="NB-ARC"/>
</dbReference>
<dbReference type="InterPro" id="IPR027417">
    <property type="entry name" value="P-loop_NTPase"/>
</dbReference>
<dbReference type="InterPro" id="IPR003822">
    <property type="entry name" value="PAH"/>
</dbReference>
<dbReference type="InterPro" id="IPR036600">
    <property type="entry name" value="PAH_sf"/>
</dbReference>
<dbReference type="InterPro" id="IPR000719">
    <property type="entry name" value="Prot_kinase_dom"/>
</dbReference>
<dbReference type="InterPro" id="IPR000157">
    <property type="entry name" value="TIR_dom"/>
</dbReference>
<dbReference type="InterPro" id="IPR035897">
    <property type="entry name" value="Toll_tir_struct_dom_sf"/>
</dbReference>
<dbReference type="InterPro" id="IPR036390">
    <property type="entry name" value="WH_DNA-bd_sf"/>
</dbReference>
<dbReference type="InterPro" id="IPR003657">
    <property type="entry name" value="WRKY_dom"/>
</dbReference>
<dbReference type="InterPro" id="IPR036576">
    <property type="entry name" value="WRKY_dom_sf"/>
</dbReference>
<dbReference type="InterPro" id="IPR056866">
    <property type="entry name" value="Znf_WRKY19"/>
</dbReference>
<dbReference type="PANTHER" id="PTHR11017">
    <property type="entry name" value="LEUCINE-RICH REPEAT-CONTAINING PROTEIN"/>
    <property type="match status" value="1"/>
</dbReference>
<dbReference type="PANTHER" id="PTHR11017:SF565">
    <property type="entry name" value="TIR DOMAIN-CONTAINING PROTEIN"/>
    <property type="match status" value="1"/>
</dbReference>
<dbReference type="Pfam" id="PF23286">
    <property type="entry name" value="LRR_13"/>
    <property type="match status" value="1"/>
</dbReference>
<dbReference type="Pfam" id="PF07725">
    <property type="entry name" value="LRR_3"/>
    <property type="match status" value="1"/>
</dbReference>
<dbReference type="Pfam" id="PF00931">
    <property type="entry name" value="NB-ARC"/>
    <property type="match status" value="1"/>
</dbReference>
<dbReference type="Pfam" id="PF02671">
    <property type="entry name" value="PAH"/>
    <property type="match status" value="1"/>
</dbReference>
<dbReference type="Pfam" id="PF00069">
    <property type="entry name" value="Pkinase"/>
    <property type="match status" value="1"/>
</dbReference>
<dbReference type="Pfam" id="PF23282">
    <property type="entry name" value="WHD_ROQ1"/>
    <property type="match status" value="1"/>
</dbReference>
<dbReference type="Pfam" id="PF03106">
    <property type="entry name" value="WRKY"/>
    <property type="match status" value="2"/>
</dbReference>
<dbReference type="Pfam" id="PF24906">
    <property type="entry name" value="Zf_WRKY19"/>
    <property type="match status" value="4"/>
</dbReference>
<dbReference type="PRINTS" id="PR00364">
    <property type="entry name" value="DISEASERSIST"/>
</dbReference>
<dbReference type="SMART" id="SM00774">
    <property type="entry name" value="WRKY"/>
    <property type="match status" value="2"/>
</dbReference>
<dbReference type="SUPFAM" id="SSF52058">
    <property type="entry name" value="L domain-like"/>
    <property type="match status" value="1"/>
</dbReference>
<dbReference type="SUPFAM" id="SSF52540">
    <property type="entry name" value="P-loop containing nucleoside triphosphate hydrolases"/>
    <property type="match status" value="1"/>
</dbReference>
<dbReference type="SUPFAM" id="SSF47762">
    <property type="entry name" value="PAH2 domain"/>
    <property type="match status" value="1"/>
</dbReference>
<dbReference type="SUPFAM" id="SSF56112">
    <property type="entry name" value="Protein kinase-like (PK-like)"/>
    <property type="match status" value="1"/>
</dbReference>
<dbReference type="SUPFAM" id="SSF52200">
    <property type="entry name" value="Toll/Interleukin receptor TIR domain"/>
    <property type="match status" value="1"/>
</dbReference>
<dbReference type="SUPFAM" id="SSF46785">
    <property type="entry name" value="Winged helix' DNA-binding domain"/>
    <property type="match status" value="1"/>
</dbReference>
<dbReference type="SUPFAM" id="SSF118290">
    <property type="entry name" value="WRKY DNA-binding domain"/>
    <property type="match status" value="2"/>
</dbReference>
<dbReference type="PROSITE" id="PS51477">
    <property type="entry name" value="PAH"/>
    <property type="match status" value="1"/>
</dbReference>
<dbReference type="PROSITE" id="PS50011">
    <property type="entry name" value="PROTEIN_KINASE_DOM"/>
    <property type="match status" value="1"/>
</dbReference>
<dbReference type="PROSITE" id="PS50104">
    <property type="entry name" value="TIR"/>
    <property type="match status" value="1"/>
</dbReference>
<dbReference type="PROSITE" id="PS50811">
    <property type="entry name" value="WRKY"/>
    <property type="match status" value="2"/>
</dbReference>
<reference key="1">
    <citation type="journal article" date="1999" name="Nature">
        <title>Sequence and analysis of chromosome 4 of the plant Arabidopsis thaliana.</title>
        <authorList>
            <person name="Mayer K.F.X."/>
            <person name="Schueller C."/>
            <person name="Wambutt R."/>
            <person name="Murphy G."/>
            <person name="Volckaert G."/>
            <person name="Pohl T."/>
            <person name="Duesterhoeft A."/>
            <person name="Stiekema W."/>
            <person name="Entian K.-D."/>
            <person name="Terryn N."/>
            <person name="Harris B."/>
            <person name="Ansorge W."/>
            <person name="Brandt P."/>
            <person name="Grivell L.A."/>
            <person name="Rieger M."/>
            <person name="Weichselgartner M."/>
            <person name="de Simone V."/>
            <person name="Obermaier B."/>
            <person name="Mache R."/>
            <person name="Mueller M."/>
            <person name="Kreis M."/>
            <person name="Delseny M."/>
            <person name="Puigdomenech P."/>
            <person name="Watson M."/>
            <person name="Schmidtheini T."/>
            <person name="Reichert B."/>
            <person name="Portetelle D."/>
            <person name="Perez-Alonso M."/>
            <person name="Boutry M."/>
            <person name="Bancroft I."/>
            <person name="Vos P."/>
            <person name="Hoheisel J."/>
            <person name="Zimmermann W."/>
            <person name="Wedler H."/>
            <person name="Ridley P."/>
            <person name="Langham S.-A."/>
            <person name="McCullagh B."/>
            <person name="Bilham L."/>
            <person name="Robben J."/>
            <person name="van der Schueren J."/>
            <person name="Grymonprez B."/>
            <person name="Chuang Y.-J."/>
            <person name="Vandenbussche F."/>
            <person name="Braeken M."/>
            <person name="Weltjens I."/>
            <person name="Voet M."/>
            <person name="Bastiaens I."/>
            <person name="Aert R."/>
            <person name="Defoor E."/>
            <person name="Weitzenegger T."/>
            <person name="Bothe G."/>
            <person name="Ramsperger U."/>
            <person name="Hilbert H."/>
            <person name="Braun M."/>
            <person name="Holzer E."/>
            <person name="Brandt A."/>
            <person name="Peters S."/>
            <person name="van Staveren M."/>
            <person name="Dirkse W."/>
            <person name="Mooijman P."/>
            <person name="Klein Lankhorst R."/>
            <person name="Rose M."/>
            <person name="Hauf J."/>
            <person name="Koetter P."/>
            <person name="Berneiser S."/>
            <person name="Hempel S."/>
            <person name="Feldpausch M."/>
            <person name="Lamberth S."/>
            <person name="Van den Daele H."/>
            <person name="De Keyser A."/>
            <person name="Buysshaert C."/>
            <person name="Gielen J."/>
            <person name="Villarroel R."/>
            <person name="De Clercq R."/>
            <person name="van Montagu M."/>
            <person name="Rogers J."/>
            <person name="Cronin A."/>
            <person name="Quail M.A."/>
            <person name="Bray-Allen S."/>
            <person name="Clark L."/>
            <person name="Doggett J."/>
            <person name="Hall S."/>
            <person name="Kay M."/>
            <person name="Lennard N."/>
            <person name="McLay K."/>
            <person name="Mayes R."/>
            <person name="Pettett A."/>
            <person name="Rajandream M.A."/>
            <person name="Lyne M."/>
            <person name="Benes V."/>
            <person name="Rechmann S."/>
            <person name="Borkova D."/>
            <person name="Bloecker H."/>
            <person name="Scharfe M."/>
            <person name="Grimm M."/>
            <person name="Loehnert T.-H."/>
            <person name="Dose S."/>
            <person name="de Haan M."/>
            <person name="Maarse A.C."/>
            <person name="Schaefer M."/>
            <person name="Mueller-Auer S."/>
            <person name="Gabel C."/>
            <person name="Fuchs M."/>
            <person name="Fartmann B."/>
            <person name="Granderath K."/>
            <person name="Dauner D."/>
            <person name="Herzl A."/>
            <person name="Neumann S."/>
            <person name="Argiriou A."/>
            <person name="Vitale D."/>
            <person name="Liguori R."/>
            <person name="Piravandi E."/>
            <person name="Massenet O."/>
            <person name="Quigley F."/>
            <person name="Clabauld G."/>
            <person name="Muendlein A."/>
            <person name="Felber R."/>
            <person name="Schnabl S."/>
            <person name="Hiller R."/>
            <person name="Schmidt W."/>
            <person name="Lecharny A."/>
            <person name="Aubourg S."/>
            <person name="Chefdor F."/>
            <person name="Cooke R."/>
            <person name="Berger C."/>
            <person name="Monfort A."/>
            <person name="Casacuberta E."/>
            <person name="Gibbons T."/>
            <person name="Weber N."/>
            <person name="Vandenbol M."/>
            <person name="Bargues M."/>
            <person name="Terol J."/>
            <person name="Torres A."/>
            <person name="Perez-Perez A."/>
            <person name="Purnelle B."/>
            <person name="Bent E."/>
            <person name="Johnson S."/>
            <person name="Tacon D."/>
            <person name="Jesse T."/>
            <person name="Heijnen L."/>
            <person name="Schwarz S."/>
            <person name="Scholler P."/>
            <person name="Heber S."/>
            <person name="Francs P."/>
            <person name="Bielke C."/>
            <person name="Frishman D."/>
            <person name="Haase D."/>
            <person name="Lemcke K."/>
            <person name="Mewes H.-W."/>
            <person name="Stocker S."/>
            <person name="Zaccaria P."/>
            <person name="Bevan M."/>
            <person name="Wilson R.K."/>
            <person name="de la Bastide M."/>
            <person name="Habermann K."/>
            <person name="Parnell L."/>
            <person name="Dedhia N."/>
            <person name="Gnoj L."/>
            <person name="Schutz K."/>
            <person name="Huang E."/>
            <person name="Spiegel L."/>
            <person name="Sekhon M."/>
            <person name="Murray J."/>
            <person name="Sheet P."/>
            <person name="Cordes M."/>
            <person name="Abu-Threideh J."/>
            <person name="Stoneking T."/>
            <person name="Kalicki J."/>
            <person name="Graves T."/>
            <person name="Harmon G."/>
            <person name="Edwards J."/>
            <person name="Latreille P."/>
            <person name="Courtney L."/>
            <person name="Cloud J."/>
            <person name="Abbott A."/>
            <person name="Scott K."/>
            <person name="Johnson D."/>
            <person name="Minx P."/>
            <person name="Bentley D."/>
            <person name="Fulton B."/>
            <person name="Miller N."/>
            <person name="Greco T."/>
            <person name="Kemp K."/>
            <person name="Kramer J."/>
            <person name="Fulton L."/>
            <person name="Mardis E."/>
            <person name="Dante M."/>
            <person name="Pepin K."/>
            <person name="Hillier L.W."/>
            <person name="Nelson J."/>
            <person name="Spieth J."/>
            <person name="Ryan E."/>
            <person name="Andrews S."/>
            <person name="Geisel C."/>
            <person name="Layman D."/>
            <person name="Du H."/>
            <person name="Ali J."/>
            <person name="Berghoff A."/>
            <person name="Jones K."/>
            <person name="Drone K."/>
            <person name="Cotton M."/>
            <person name="Joshu C."/>
            <person name="Antonoiu B."/>
            <person name="Zidanic M."/>
            <person name="Strong C."/>
            <person name="Sun H."/>
            <person name="Lamar B."/>
            <person name="Yordan C."/>
            <person name="Ma P."/>
            <person name="Zhong J."/>
            <person name="Preston R."/>
            <person name="Vil D."/>
            <person name="Shekher M."/>
            <person name="Matero A."/>
            <person name="Shah R."/>
            <person name="Swaby I.K."/>
            <person name="O'Shaughnessy A."/>
            <person name="Rodriguez M."/>
            <person name="Hoffman J."/>
            <person name="Till S."/>
            <person name="Granat S."/>
            <person name="Shohdy N."/>
            <person name="Hasegawa A."/>
            <person name="Hameed A."/>
            <person name="Lodhi M."/>
            <person name="Johnson A."/>
            <person name="Chen E."/>
            <person name="Marra M.A."/>
            <person name="Martienssen R."/>
            <person name="McCombie W.R."/>
        </authorList>
    </citation>
    <scope>NUCLEOTIDE SEQUENCE [LARGE SCALE GENOMIC DNA]</scope>
    <source>
        <strain>cv. Columbia</strain>
    </source>
</reference>
<reference key="2">
    <citation type="journal article" date="2017" name="Plant J.">
        <title>Araport11: a complete reannotation of the Arabidopsis thaliana reference genome.</title>
        <authorList>
            <person name="Cheng C.Y."/>
            <person name="Krishnakumar V."/>
            <person name="Chan A.P."/>
            <person name="Thibaud-Nissen F."/>
            <person name="Schobel S."/>
            <person name="Town C.D."/>
        </authorList>
    </citation>
    <scope>GENOME REANNOTATION</scope>
    <source>
        <strain>cv. Columbia</strain>
    </source>
</reference>
<proteinExistence type="evidence at protein level"/>
<comment type="function">
    <text evidence="1">Transcription factor. Interacts specifically with the W box (5'-(T)TGAC[CT]-3'), a frequently occurring elicitor-responsive cis-acting element. May act also as a disease resistance protein with a serine/threonine-protein kinase activity (By similarity).</text>
</comment>
<comment type="interaction">
    <interactant intactId="EBI-2356712">
        <id>Q9SZ67</id>
    </interactant>
    <interactant intactId="EBI-697501">
        <id>Q9FVU9</id>
        <label>CSN5B</label>
    </interactant>
    <organismsDiffer>false</organismsDiffer>
    <experiments>3</experiments>
</comment>
<comment type="subcellular location">
    <subcellularLocation>
        <location evidence="7">Nucleus</location>
    </subcellularLocation>
</comment>
<comment type="alternative products">
    <event type="alternative splicing"/>
    <isoform>
        <id>Q9SZ67-1</id>
        <name>1</name>
        <sequence type="displayed"/>
    </isoform>
    <text>A number of isoforms are produced. According to EST sequences.</text>
</comment>
<comment type="similarity">
    <text evidence="7">Belongs to the disease resistance X-TIR-NB-LRR-X family.</text>
</comment>
<comment type="online information" name="NIB-LRRS">
    <link uri="http://niblrrs.ucdavis.edu"/>
    <text>Functional and comparative genomics of disease resistance gene homologs</text>
</comment>
<protein>
    <recommendedName>
        <fullName>Probable WRKY transcription factor 19</fullName>
    </recommendedName>
    <alternativeName>
        <fullName>WRKY DNA-binding protein 19</fullName>
    </alternativeName>
</protein>
<accession>Q9SZ67</accession>
<feature type="chain" id="PRO_0000133661" description="Probable WRKY transcription factor 19">
    <location>
        <begin position="1"/>
        <end position="1895"/>
    </location>
</feature>
<feature type="domain" description="PAH" evidence="5">
    <location>
        <begin position="291"/>
        <end position="371"/>
    </location>
</feature>
<feature type="domain" description="TIR" evidence="3">
    <location>
        <begin position="666"/>
        <end position="808"/>
    </location>
</feature>
<feature type="domain" description="NB-ARC">
    <location>
        <begin position="800"/>
        <end position="1087"/>
    </location>
</feature>
<feature type="repeat" description="LRR 1">
    <location>
        <begin position="1206"/>
        <end position="1227"/>
    </location>
</feature>
<feature type="repeat" description="LRR 2">
    <location>
        <begin position="1228"/>
        <end position="1249"/>
    </location>
</feature>
<feature type="repeat" description="LRR 3">
    <location>
        <begin position="1259"/>
        <end position="1281"/>
    </location>
</feature>
<feature type="repeat" description="LRR 4">
    <location>
        <begin position="1282"/>
        <end position="1304"/>
    </location>
</feature>
<feature type="repeat" description="LRR 5">
    <location>
        <begin position="1306"/>
        <end position="1328"/>
    </location>
</feature>
<feature type="repeat" description="LRR 6">
    <location>
        <begin position="1329"/>
        <end position="1351"/>
    </location>
</feature>
<feature type="repeat" description="LRR 7">
    <location>
        <begin position="1352"/>
        <end position="1371"/>
    </location>
</feature>
<feature type="repeat" description="LRR 8">
    <location>
        <begin position="1373"/>
        <end position="1395"/>
    </location>
</feature>
<feature type="repeat" description="LRR 9">
    <location>
        <begin position="1397"/>
        <end position="1419"/>
    </location>
</feature>
<feature type="repeat" description="LRR 10">
    <location>
        <begin position="1421"/>
        <end position="1442"/>
    </location>
</feature>
<feature type="domain" description="Protein kinase" evidence="2">
    <location>
        <begin position="1626"/>
        <end position="1877"/>
    </location>
</feature>
<feature type="DNA-binding region" description="WRKY 1" evidence="4">
    <location>
        <begin position="462"/>
        <end position="526"/>
    </location>
</feature>
<feature type="DNA-binding region" description="WRKY 2" evidence="4">
    <location>
        <begin position="635"/>
        <end position="700"/>
    </location>
</feature>
<feature type="region of interest" description="Disordered" evidence="6">
    <location>
        <begin position="1"/>
        <end position="85"/>
    </location>
</feature>
<feature type="region of interest" description="Disordered" evidence="6">
    <location>
        <begin position="408"/>
        <end position="442"/>
    </location>
</feature>
<feature type="region of interest" description="Disordered" evidence="6">
    <location>
        <begin position="517"/>
        <end position="538"/>
    </location>
</feature>
<feature type="region of interest" description="Disordered" evidence="6">
    <location>
        <begin position="580"/>
        <end position="620"/>
    </location>
</feature>
<feature type="region of interest" description="Disordered" evidence="6">
    <location>
        <begin position="1562"/>
        <end position="1583"/>
    </location>
</feature>
<feature type="compositionally biased region" description="Polar residues" evidence="6">
    <location>
        <begin position="10"/>
        <end position="22"/>
    </location>
</feature>
<feature type="compositionally biased region" description="Low complexity" evidence="6">
    <location>
        <begin position="28"/>
        <end position="39"/>
    </location>
</feature>
<feature type="compositionally biased region" description="Polar residues" evidence="6">
    <location>
        <begin position="46"/>
        <end position="62"/>
    </location>
</feature>
<feature type="compositionally biased region" description="Low complexity" evidence="6">
    <location>
        <begin position="75"/>
        <end position="85"/>
    </location>
</feature>
<feature type="compositionally biased region" description="Polar residues" evidence="6">
    <location>
        <begin position="408"/>
        <end position="417"/>
    </location>
</feature>
<feature type="compositionally biased region" description="Low complexity" evidence="6">
    <location>
        <begin position="418"/>
        <end position="427"/>
    </location>
</feature>
<feature type="compositionally biased region" description="Polar residues" evidence="6">
    <location>
        <begin position="428"/>
        <end position="442"/>
    </location>
</feature>
<feature type="active site" evidence="1">
    <location>
        <position position="1758"/>
    </location>
</feature>
<feature type="binding site" evidence="2">
    <location>
        <begin position="844"/>
        <end position="851"/>
    </location>
    <ligand>
        <name>ATP</name>
        <dbReference type="ChEBI" id="CHEBI:30616"/>
    </ligand>
</feature>
<feature type="binding site" evidence="2">
    <location>
        <begin position="1632"/>
        <end position="1640"/>
    </location>
    <ligand>
        <name>ATP</name>
        <dbReference type="ChEBI" id="CHEBI:30616"/>
    </ligand>
</feature>
<feature type="binding site" evidence="2">
    <location>
        <position position="1654"/>
    </location>
    <ligand>
        <name>ATP</name>
        <dbReference type="ChEBI" id="CHEBI:30616"/>
    </ligand>
</feature>
<evidence type="ECO:0000250" key="1"/>
<evidence type="ECO:0000255" key="2">
    <source>
        <dbReference type="PROSITE-ProRule" id="PRU00159"/>
    </source>
</evidence>
<evidence type="ECO:0000255" key="3">
    <source>
        <dbReference type="PROSITE-ProRule" id="PRU00204"/>
    </source>
</evidence>
<evidence type="ECO:0000255" key="4">
    <source>
        <dbReference type="PROSITE-ProRule" id="PRU00223"/>
    </source>
</evidence>
<evidence type="ECO:0000255" key="5">
    <source>
        <dbReference type="PROSITE-ProRule" id="PRU00810"/>
    </source>
</evidence>
<evidence type="ECO:0000256" key="6">
    <source>
        <dbReference type="SAM" id="MobiDB-lite"/>
    </source>
</evidence>
<evidence type="ECO:0000305" key="7"/>
<organism>
    <name type="scientific">Arabidopsis thaliana</name>
    <name type="common">Mouse-ear cress</name>
    <dbReference type="NCBI Taxonomy" id="3702"/>
    <lineage>
        <taxon>Eukaryota</taxon>
        <taxon>Viridiplantae</taxon>
        <taxon>Streptophyta</taxon>
        <taxon>Embryophyta</taxon>
        <taxon>Tracheophyta</taxon>
        <taxon>Spermatophyta</taxon>
        <taxon>Magnoliopsida</taxon>
        <taxon>eudicotyledons</taxon>
        <taxon>Gunneridae</taxon>
        <taxon>Pentapetalae</taxon>
        <taxon>rosids</taxon>
        <taxon>malvids</taxon>
        <taxon>Brassicales</taxon>
        <taxon>Brassicaceae</taxon>
        <taxon>Camelineae</taxon>
        <taxon>Arabidopsis</taxon>
    </lineage>
</organism>
<name>WRK19_ARATH</name>
<gene>
    <name type="primary">WRKY19</name>
    <name type="ordered locus">At4g12020</name>
    <name type="ORF">F16J13.90</name>
</gene>
<keyword id="KW-0025">Alternative splicing</keyword>
<keyword id="KW-0067">ATP-binding</keyword>
<keyword id="KW-0238">DNA-binding</keyword>
<keyword id="KW-0418">Kinase</keyword>
<keyword id="KW-0433">Leucine-rich repeat</keyword>
<keyword id="KW-0547">Nucleotide-binding</keyword>
<keyword id="KW-0539">Nucleus</keyword>
<keyword id="KW-0611">Plant defense</keyword>
<keyword id="KW-1185">Reference proteome</keyword>
<keyword id="KW-0677">Repeat</keyword>
<keyword id="KW-0723">Serine/threonine-protein kinase</keyword>
<keyword id="KW-0804">Transcription</keyword>
<keyword id="KW-0805">Transcription regulation</keyword>
<keyword id="KW-0808">Transferase</keyword>